<accession>B3PPT3</accession>
<reference key="1">
    <citation type="journal article" date="2010" name="Appl. Environ. Microbiol.">
        <title>Conserved symbiotic plasmid DNA sequences in the multireplicon pangenomic structure of Rhizobium etli.</title>
        <authorList>
            <person name="Gonzalez V."/>
            <person name="Acosta J.L."/>
            <person name="Santamaria R.I."/>
            <person name="Bustos P."/>
            <person name="Fernandez J.L."/>
            <person name="Hernandez Gonzalez I.L."/>
            <person name="Diaz R."/>
            <person name="Flores M."/>
            <person name="Palacios R."/>
            <person name="Mora J."/>
            <person name="Davila G."/>
        </authorList>
    </citation>
    <scope>NUCLEOTIDE SEQUENCE [LARGE SCALE GENOMIC DNA]</scope>
    <source>
        <strain>CIAT 652</strain>
    </source>
</reference>
<feature type="chain" id="PRO_1000140780" description="Small ribosomal subunit protein uS4">
    <location>
        <begin position="1"/>
        <end position="205"/>
    </location>
</feature>
<feature type="domain" description="S4 RNA-binding" evidence="1">
    <location>
        <begin position="94"/>
        <end position="157"/>
    </location>
</feature>
<feature type="region of interest" description="Disordered" evidence="2">
    <location>
        <begin position="1"/>
        <end position="46"/>
    </location>
</feature>
<feature type="compositionally biased region" description="Basic and acidic residues" evidence="2">
    <location>
        <begin position="1"/>
        <end position="16"/>
    </location>
</feature>
<protein>
    <recommendedName>
        <fullName evidence="1">Small ribosomal subunit protein uS4</fullName>
    </recommendedName>
    <alternativeName>
        <fullName evidence="3">30S ribosomal protein S4</fullName>
    </alternativeName>
</protein>
<sequence length="205" mass="23451">MSKRESSKYKIDRRMGENIWGRPKSPVNRREYGPGQHGQRRKGKLSDFGVQLRAKQKLKGYYGDLREKQFRAIFAEADRRKGDTSENLIGLLESRLDAIVYRAKFVPTVFAARQFVNHGHVTVNGVRVNIGSYRCKAGDVIEVREKSKQLVTVLEAVSLAERDVPDYIEVDHNKMVATFGRVPTLSDVPFPVVMEPHLVVEFYSR</sequence>
<dbReference type="EMBL" id="CP001074">
    <property type="protein sequence ID" value="ACE91362.1"/>
    <property type="molecule type" value="Genomic_DNA"/>
</dbReference>
<dbReference type="SMR" id="B3PPT3"/>
<dbReference type="KEGG" id="rec:RHECIAT_CH0002408"/>
<dbReference type="eggNOG" id="COG0522">
    <property type="taxonomic scope" value="Bacteria"/>
</dbReference>
<dbReference type="HOGENOM" id="CLU_092403_0_0_5"/>
<dbReference type="Proteomes" id="UP000008817">
    <property type="component" value="Chromosome"/>
</dbReference>
<dbReference type="GO" id="GO:0015935">
    <property type="term" value="C:small ribosomal subunit"/>
    <property type="evidence" value="ECO:0007669"/>
    <property type="project" value="InterPro"/>
</dbReference>
<dbReference type="GO" id="GO:0019843">
    <property type="term" value="F:rRNA binding"/>
    <property type="evidence" value="ECO:0007669"/>
    <property type="project" value="UniProtKB-UniRule"/>
</dbReference>
<dbReference type="GO" id="GO:0003735">
    <property type="term" value="F:structural constituent of ribosome"/>
    <property type="evidence" value="ECO:0007669"/>
    <property type="project" value="InterPro"/>
</dbReference>
<dbReference type="GO" id="GO:0042274">
    <property type="term" value="P:ribosomal small subunit biogenesis"/>
    <property type="evidence" value="ECO:0007669"/>
    <property type="project" value="TreeGrafter"/>
</dbReference>
<dbReference type="GO" id="GO:0006412">
    <property type="term" value="P:translation"/>
    <property type="evidence" value="ECO:0007669"/>
    <property type="project" value="UniProtKB-UniRule"/>
</dbReference>
<dbReference type="CDD" id="cd00165">
    <property type="entry name" value="S4"/>
    <property type="match status" value="1"/>
</dbReference>
<dbReference type="FunFam" id="3.10.290.10:FF:000001">
    <property type="entry name" value="30S ribosomal protein S4"/>
    <property type="match status" value="1"/>
</dbReference>
<dbReference type="Gene3D" id="1.10.1050.10">
    <property type="entry name" value="Ribosomal Protein S4 Delta 41, Chain A, domain 1"/>
    <property type="match status" value="1"/>
</dbReference>
<dbReference type="Gene3D" id="3.10.290.10">
    <property type="entry name" value="RNA-binding S4 domain"/>
    <property type="match status" value="1"/>
</dbReference>
<dbReference type="HAMAP" id="MF_01306_B">
    <property type="entry name" value="Ribosomal_uS4_B"/>
    <property type="match status" value="1"/>
</dbReference>
<dbReference type="InterPro" id="IPR022801">
    <property type="entry name" value="Ribosomal_uS4"/>
</dbReference>
<dbReference type="InterPro" id="IPR005709">
    <property type="entry name" value="Ribosomal_uS4_bac-type"/>
</dbReference>
<dbReference type="InterPro" id="IPR018079">
    <property type="entry name" value="Ribosomal_uS4_CS"/>
</dbReference>
<dbReference type="InterPro" id="IPR001912">
    <property type="entry name" value="Ribosomal_uS4_N"/>
</dbReference>
<dbReference type="InterPro" id="IPR002942">
    <property type="entry name" value="S4_RNA-bd"/>
</dbReference>
<dbReference type="InterPro" id="IPR036986">
    <property type="entry name" value="S4_RNA-bd_sf"/>
</dbReference>
<dbReference type="NCBIfam" id="NF003717">
    <property type="entry name" value="PRK05327.1"/>
    <property type="match status" value="1"/>
</dbReference>
<dbReference type="NCBIfam" id="TIGR01017">
    <property type="entry name" value="rpsD_bact"/>
    <property type="match status" value="1"/>
</dbReference>
<dbReference type="PANTHER" id="PTHR11831">
    <property type="entry name" value="30S 40S RIBOSOMAL PROTEIN"/>
    <property type="match status" value="1"/>
</dbReference>
<dbReference type="PANTHER" id="PTHR11831:SF4">
    <property type="entry name" value="SMALL RIBOSOMAL SUBUNIT PROTEIN US4M"/>
    <property type="match status" value="1"/>
</dbReference>
<dbReference type="Pfam" id="PF00163">
    <property type="entry name" value="Ribosomal_S4"/>
    <property type="match status" value="1"/>
</dbReference>
<dbReference type="Pfam" id="PF01479">
    <property type="entry name" value="S4"/>
    <property type="match status" value="1"/>
</dbReference>
<dbReference type="SMART" id="SM01390">
    <property type="entry name" value="Ribosomal_S4"/>
    <property type="match status" value="1"/>
</dbReference>
<dbReference type="SMART" id="SM00363">
    <property type="entry name" value="S4"/>
    <property type="match status" value="1"/>
</dbReference>
<dbReference type="SUPFAM" id="SSF55174">
    <property type="entry name" value="Alpha-L RNA-binding motif"/>
    <property type="match status" value="1"/>
</dbReference>
<dbReference type="PROSITE" id="PS00632">
    <property type="entry name" value="RIBOSOMAL_S4"/>
    <property type="match status" value="1"/>
</dbReference>
<dbReference type="PROSITE" id="PS50889">
    <property type="entry name" value="S4"/>
    <property type="match status" value="1"/>
</dbReference>
<gene>
    <name evidence="1" type="primary">rpsD</name>
    <name type="ordered locus">RHECIAT_CH0002408</name>
</gene>
<keyword id="KW-0687">Ribonucleoprotein</keyword>
<keyword id="KW-0689">Ribosomal protein</keyword>
<keyword id="KW-0694">RNA-binding</keyword>
<keyword id="KW-0699">rRNA-binding</keyword>
<name>RS4_RHIE6</name>
<comment type="function">
    <text evidence="1">One of the primary rRNA binding proteins, it binds directly to 16S rRNA where it nucleates assembly of the body of the 30S subunit.</text>
</comment>
<comment type="function">
    <text evidence="1">With S5 and S12 plays an important role in translational accuracy.</text>
</comment>
<comment type="subunit">
    <text evidence="1">Part of the 30S ribosomal subunit. Contacts protein S5. The interaction surface between S4 and S5 is involved in control of translational fidelity.</text>
</comment>
<comment type="similarity">
    <text evidence="1">Belongs to the universal ribosomal protein uS4 family.</text>
</comment>
<organism>
    <name type="scientific">Rhizobium etli (strain CIAT 652)</name>
    <dbReference type="NCBI Taxonomy" id="491916"/>
    <lineage>
        <taxon>Bacteria</taxon>
        <taxon>Pseudomonadati</taxon>
        <taxon>Pseudomonadota</taxon>
        <taxon>Alphaproteobacteria</taxon>
        <taxon>Hyphomicrobiales</taxon>
        <taxon>Rhizobiaceae</taxon>
        <taxon>Rhizobium/Agrobacterium group</taxon>
        <taxon>Rhizobium</taxon>
    </lineage>
</organism>
<evidence type="ECO:0000255" key="1">
    <source>
        <dbReference type="HAMAP-Rule" id="MF_01306"/>
    </source>
</evidence>
<evidence type="ECO:0000256" key="2">
    <source>
        <dbReference type="SAM" id="MobiDB-lite"/>
    </source>
</evidence>
<evidence type="ECO:0000305" key="3"/>
<proteinExistence type="inferred from homology"/>